<comment type="function">
    <text evidence="1">F(1)F(0) ATP synthase produces ATP from ADP in the presence of a proton or sodium gradient. F-type ATPases consist of two structural domains, F(1) containing the extramembraneous catalytic core and F(0) containing the membrane proton channel, linked together by a central stalk and a peripheral stalk. During catalysis, ATP synthesis in the catalytic domain of F(1) is coupled via a rotary mechanism of the central stalk subunits to proton translocation.</text>
</comment>
<comment type="function">
    <text evidence="1">This protein is part of the stalk that links CF(0) to CF(1). It either transmits conformational changes from CF(0) to CF(1) or is implicated in proton conduction.</text>
</comment>
<comment type="subunit">
    <text evidence="1">F-type ATPases have 2 components, F(1) - the catalytic core - and F(0) - the membrane proton channel. F(1) has five subunits: alpha(3), beta(3), gamma(1), delta(1), epsilon(1). F(0) has three main subunits: a(1), b(2) and c(10-14). The alpha and beta chains form an alternating ring which encloses part of the gamma chain. F(1) is attached to F(0) by a central stalk formed by the gamma and epsilon chains, while a peripheral stalk is formed by the delta and b chains.</text>
</comment>
<comment type="subcellular location">
    <subcellularLocation>
        <location evidence="1">Cell membrane</location>
        <topology evidence="1">Peripheral membrane protein</topology>
    </subcellularLocation>
</comment>
<comment type="similarity">
    <text evidence="1">Belongs to the ATPase delta chain family.</text>
</comment>
<evidence type="ECO:0000255" key="1">
    <source>
        <dbReference type="HAMAP-Rule" id="MF_01416"/>
    </source>
</evidence>
<organism>
    <name type="scientific">Lactobacillus gasseri (strain ATCC 33323 / DSM 20243 / BCRC 14619 / CIP 102991 / JCM 1131 / KCTC 3163 / NCIMB 11718 / NCTC 13722 / AM63)</name>
    <dbReference type="NCBI Taxonomy" id="324831"/>
    <lineage>
        <taxon>Bacteria</taxon>
        <taxon>Bacillati</taxon>
        <taxon>Bacillota</taxon>
        <taxon>Bacilli</taxon>
        <taxon>Lactobacillales</taxon>
        <taxon>Lactobacillaceae</taxon>
        <taxon>Lactobacillus</taxon>
    </lineage>
</organism>
<accession>Q042L2</accession>
<sequence>MALSREEIASRYSKALFAYAQDAKKLDEVHEDMNVLLQVAKENPDMLRLLSDPIIRKNQKEEFLSSFSGEFSSETKNFLEFLLEYGRFNALTEIIKAFDALYDEDKNIASGTAVSAINLDEDELNRISQAYAKKYGFKKLILTNEVDSSILGGIILKVGDRIIDGSIRTRLQQIREQLIENR</sequence>
<name>ATPD_LACGA</name>
<reference key="1">
    <citation type="journal article" date="2006" name="Proc. Natl. Acad. Sci. U.S.A.">
        <title>Comparative genomics of the lactic acid bacteria.</title>
        <authorList>
            <person name="Makarova K.S."/>
            <person name="Slesarev A."/>
            <person name="Wolf Y.I."/>
            <person name="Sorokin A."/>
            <person name="Mirkin B."/>
            <person name="Koonin E.V."/>
            <person name="Pavlov A."/>
            <person name="Pavlova N."/>
            <person name="Karamychev V."/>
            <person name="Polouchine N."/>
            <person name="Shakhova V."/>
            <person name="Grigoriev I."/>
            <person name="Lou Y."/>
            <person name="Rohksar D."/>
            <person name="Lucas S."/>
            <person name="Huang K."/>
            <person name="Goodstein D.M."/>
            <person name="Hawkins T."/>
            <person name="Plengvidhya V."/>
            <person name="Welker D."/>
            <person name="Hughes J."/>
            <person name="Goh Y."/>
            <person name="Benson A."/>
            <person name="Baldwin K."/>
            <person name="Lee J.-H."/>
            <person name="Diaz-Muniz I."/>
            <person name="Dosti B."/>
            <person name="Smeianov V."/>
            <person name="Wechter W."/>
            <person name="Barabote R."/>
            <person name="Lorca G."/>
            <person name="Altermann E."/>
            <person name="Barrangou R."/>
            <person name="Ganesan B."/>
            <person name="Xie Y."/>
            <person name="Rawsthorne H."/>
            <person name="Tamir D."/>
            <person name="Parker C."/>
            <person name="Breidt F."/>
            <person name="Broadbent J.R."/>
            <person name="Hutkins R."/>
            <person name="O'Sullivan D."/>
            <person name="Steele J."/>
            <person name="Unlu G."/>
            <person name="Saier M.H. Jr."/>
            <person name="Klaenhammer T."/>
            <person name="Richardson P."/>
            <person name="Kozyavkin S."/>
            <person name="Weimer B.C."/>
            <person name="Mills D.A."/>
        </authorList>
    </citation>
    <scope>NUCLEOTIDE SEQUENCE [LARGE SCALE GENOMIC DNA]</scope>
    <source>
        <strain>ATCC 33323 / DSM 20243 / BCRC 14619 / CIP 102991 / JCM 1131 / KCTC 3163 / NCIMB 11718 / NCTC 13722 / AM63</strain>
    </source>
</reference>
<protein>
    <recommendedName>
        <fullName evidence="1">ATP synthase subunit delta</fullName>
    </recommendedName>
    <alternativeName>
        <fullName evidence="1">ATP synthase F(1) sector subunit delta</fullName>
    </alternativeName>
    <alternativeName>
        <fullName evidence="1">F-type ATPase subunit delta</fullName>
        <shortName evidence="1">F-ATPase subunit delta</shortName>
    </alternativeName>
</protein>
<gene>
    <name evidence="1" type="primary">atpH</name>
    <name type="ordered locus">LGAS_1241</name>
</gene>
<feature type="chain" id="PRO_1000184735" description="ATP synthase subunit delta">
    <location>
        <begin position="1"/>
        <end position="182"/>
    </location>
</feature>
<proteinExistence type="inferred from homology"/>
<dbReference type="EMBL" id="CP000413">
    <property type="protein sequence ID" value="ABJ60610.1"/>
    <property type="molecule type" value="Genomic_DNA"/>
</dbReference>
<dbReference type="RefSeq" id="WP_003647069.1">
    <property type="nucleotide sequence ID" value="NZ_WBMG01000002.1"/>
</dbReference>
<dbReference type="SMR" id="Q042L2"/>
<dbReference type="GeneID" id="29638907"/>
<dbReference type="KEGG" id="lga:LGAS_1241"/>
<dbReference type="HOGENOM" id="CLU_085114_4_1_9"/>
<dbReference type="BioCyc" id="LGAS324831:G1G6Y-1237-MONOMER"/>
<dbReference type="Proteomes" id="UP000000664">
    <property type="component" value="Chromosome"/>
</dbReference>
<dbReference type="GO" id="GO:0005886">
    <property type="term" value="C:plasma membrane"/>
    <property type="evidence" value="ECO:0007669"/>
    <property type="project" value="UniProtKB-SubCell"/>
</dbReference>
<dbReference type="GO" id="GO:0045259">
    <property type="term" value="C:proton-transporting ATP synthase complex"/>
    <property type="evidence" value="ECO:0007669"/>
    <property type="project" value="UniProtKB-KW"/>
</dbReference>
<dbReference type="GO" id="GO:0046933">
    <property type="term" value="F:proton-transporting ATP synthase activity, rotational mechanism"/>
    <property type="evidence" value="ECO:0007669"/>
    <property type="project" value="UniProtKB-UniRule"/>
</dbReference>
<dbReference type="Gene3D" id="1.10.520.20">
    <property type="entry name" value="N-terminal domain of the delta subunit of the F1F0-ATP synthase"/>
    <property type="match status" value="1"/>
</dbReference>
<dbReference type="HAMAP" id="MF_01416">
    <property type="entry name" value="ATP_synth_delta_bact"/>
    <property type="match status" value="1"/>
</dbReference>
<dbReference type="InterPro" id="IPR026015">
    <property type="entry name" value="ATP_synth_OSCP/delta_N_sf"/>
</dbReference>
<dbReference type="InterPro" id="IPR020781">
    <property type="entry name" value="ATPase_OSCP/d_CS"/>
</dbReference>
<dbReference type="InterPro" id="IPR000711">
    <property type="entry name" value="ATPase_OSCP/dsu"/>
</dbReference>
<dbReference type="NCBIfam" id="TIGR01145">
    <property type="entry name" value="ATP_synt_delta"/>
    <property type="match status" value="1"/>
</dbReference>
<dbReference type="NCBIfam" id="NF004402">
    <property type="entry name" value="PRK05758.2-2"/>
    <property type="match status" value="1"/>
</dbReference>
<dbReference type="NCBIfam" id="NF004403">
    <property type="entry name" value="PRK05758.2-4"/>
    <property type="match status" value="1"/>
</dbReference>
<dbReference type="PANTHER" id="PTHR11910">
    <property type="entry name" value="ATP SYNTHASE DELTA CHAIN"/>
    <property type="match status" value="1"/>
</dbReference>
<dbReference type="Pfam" id="PF00213">
    <property type="entry name" value="OSCP"/>
    <property type="match status" value="1"/>
</dbReference>
<dbReference type="PRINTS" id="PR00125">
    <property type="entry name" value="ATPASEDELTA"/>
</dbReference>
<dbReference type="SUPFAM" id="SSF47928">
    <property type="entry name" value="N-terminal domain of the delta subunit of the F1F0-ATP synthase"/>
    <property type="match status" value="1"/>
</dbReference>
<dbReference type="PROSITE" id="PS00389">
    <property type="entry name" value="ATPASE_DELTA"/>
    <property type="match status" value="1"/>
</dbReference>
<keyword id="KW-0066">ATP synthesis</keyword>
<keyword id="KW-1003">Cell membrane</keyword>
<keyword id="KW-0139">CF(1)</keyword>
<keyword id="KW-0375">Hydrogen ion transport</keyword>
<keyword id="KW-0406">Ion transport</keyword>
<keyword id="KW-0472">Membrane</keyword>
<keyword id="KW-0813">Transport</keyword>